<name>TIA1_HUMAN</name>
<protein>
    <recommendedName>
        <fullName evidence="24">Cytotoxic granule associated RNA binding protein TIA1</fullName>
    </recommendedName>
    <alternativeName>
        <fullName evidence="22">Nucleolysin TIA-1 isoform p40</fullName>
    </alternativeName>
    <alternativeName>
        <fullName>RNA-binding protein TIA-1</fullName>
    </alternativeName>
    <alternativeName>
        <fullName>T-cell-restricted intracellular antigen-1</fullName>
        <shortName>TIA-1</shortName>
    </alternativeName>
    <alternativeName>
        <fullName>p40-TIA-1</fullName>
    </alternativeName>
</protein>
<reference key="1">
    <citation type="journal article" date="1991" name="Cell">
        <title>A polyadenylate binding protein localized to the granules of cytolytic lymphocytes induces DNA fragmentation in target cells.</title>
        <authorList>
            <person name="Tian Q."/>
            <person name="Streuli M."/>
            <person name="Saito H."/>
            <person name="Schlossman S.F."/>
            <person name="Anderson P."/>
        </authorList>
    </citation>
    <scope>NUCLEOTIDE SEQUENCE [MRNA] (ISOFORM SHORT)</scope>
    <scope>FUNCTION</scope>
</reference>
<reference key="2">
    <citation type="journal article" date="1994" name="J. Immunol.">
        <title>Intron-exon organization and chromosomal localization of the human TIA-1 gene.</title>
        <authorList>
            <person name="Kawakami A."/>
            <person name="Tian Q."/>
            <person name="Streuli M."/>
            <person name="Poe M."/>
            <person name="Edelhoff S."/>
            <person name="Disteche C.M."/>
            <person name="Anderson P."/>
        </authorList>
    </citation>
    <scope>NUCLEOTIDE SEQUENCE [GENOMIC DNA]</scope>
    <scope>ALTERNATIVE SPLICING</scope>
    <source>
        <tissue>Leukocyte</tissue>
    </source>
</reference>
<reference key="3">
    <citation type="journal article" date="2005" name="Nature">
        <title>Generation and annotation of the DNA sequences of human chromosomes 2 and 4.</title>
        <authorList>
            <person name="Hillier L.W."/>
            <person name="Graves T.A."/>
            <person name="Fulton R.S."/>
            <person name="Fulton L.A."/>
            <person name="Pepin K.H."/>
            <person name="Minx P."/>
            <person name="Wagner-McPherson C."/>
            <person name="Layman D."/>
            <person name="Wylie K."/>
            <person name="Sekhon M."/>
            <person name="Becker M.C."/>
            <person name="Fewell G.A."/>
            <person name="Delehaunty K.D."/>
            <person name="Miner T.L."/>
            <person name="Nash W.E."/>
            <person name="Kremitzki C."/>
            <person name="Oddy L."/>
            <person name="Du H."/>
            <person name="Sun H."/>
            <person name="Bradshaw-Cordum H."/>
            <person name="Ali J."/>
            <person name="Carter J."/>
            <person name="Cordes M."/>
            <person name="Harris A."/>
            <person name="Isak A."/>
            <person name="van Brunt A."/>
            <person name="Nguyen C."/>
            <person name="Du F."/>
            <person name="Courtney L."/>
            <person name="Kalicki J."/>
            <person name="Ozersky P."/>
            <person name="Abbott S."/>
            <person name="Armstrong J."/>
            <person name="Belter E.A."/>
            <person name="Caruso L."/>
            <person name="Cedroni M."/>
            <person name="Cotton M."/>
            <person name="Davidson T."/>
            <person name="Desai A."/>
            <person name="Elliott G."/>
            <person name="Erb T."/>
            <person name="Fronick C."/>
            <person name="Gaige T."/>
            <person name="Haakenson W."/>
            <person name="Haglund K."/>
            <person name="Holmes A."/>
            <person name="Harkins R."/>
            <person name="Kim K."/>
            <person name="Kruchowski S.S."/>
            <person name="Strong C.M."/>
            <person name="Grewal N."/>
            <person name="Goyea E."/>
            <person name="Hou S."/>
            <person name="Levy A."/>
            <person name="Martinka S."/>
            <person name="Mead K."/>
            <person name="McLellan M.D."/>
            <person name="Meyer R."/>
            <person name="Randall-Maher J."/>
            <person name="Tomlinson C."/>
            <person name="Dauphin-Kohlberg S."/>
            <person name="Kozlowicz-Reilly A."/>
            <person name="Shah N."/>
            <person name="Swearengen-Shahid S."/>
            <person name="Snider J."/>
            <person name="Strong J.T."/>
            <person name="Thompson J."/>
            <person name="Yoakum M."/>
            <person name="Leonard S."/>
            <person name="Pearman C."/>
            <person name="Trani L."/>
            <person name="Radionenko M."/>
            <person name="Waligorski J.E."/>
            <person name="Wang C."/>
            <person name="Rock S.M."/>
            <person name="Tin-Wollam A.-M."/>
            <person name="Maupin R."/>
            <person name="Latreille P."/>
            <person name="Wendl M.C."/>
            <person name="Yang S.-P."/>
            <person name="Pohl C."/>
            <person name="Wallis J.W."/>
            <person name="Spieth J."/>
            <person name="Bieri T.A."/>
            <person name="Berkowicz N."/>
            <person name="Nelson J.O."/>
            <person name="Osborne J."/>
            <person name="Ding L."/>
            <person name="Meyer R."/>
            <person name="Sabo A."/>
            <person name="Shotland Y."/>
            <person name="Sinha P."/>
            <person name="Wohldmann P.E."/>
            <person name="Cook L.L."/>
            <person name="Hickenbotham M.T."/>
            <person name="Eldred J."/>
            <person name="Williams D."/>
            <person name="Jones T.A."/>
            <person name="She X."/>
            <person name="Ciccarelli F.D."/>
            <person name="Izaurralde E."/>
            <person name="Taylor J."/>
            <person name="Schmutz J."/>
            <person name="Myers R.M."/>
            <person name="Cox D.R."/>
            <person name="Huang X."/>
            <person name="McPherson J.D."/>
            <person name="Mardis E.R."/>
            <person name="Clifton S.W."/>
            <person name="Warren W.C."/>
            <person name="Chinwalla A.T."/>
            <person name="Eddy S.R."/>
            <person name="Marra M.A."/>
            <person name="Ovcharenko I."/>
            <person name="Furey T.S."/>
            <person name="Miller W."/>
            <person name="Eichler E.E."/>
            <person name="Bork P."/>
            <person name="Suyama M."/>
            <person name="Torrents D."/>
            <person name="Waterston R.H."/>
            <person name="Wilson R.K."/>
        </authorList>
    </citation>
    <scope>NUCLEOTIDE SEQUENCE [LARGE SCALE GENOMIC DNA]</scope>
</reference>
<reference key="4">
    <citation type="submission" date="2005-09" db="EMBL/GenBank/DDBJ databases">
        <authorList>
            <person name="Mural R.J."/>
            <person name="Istrail S."/>
            <person name="Sutton G.G."/>
            <person name="Florea L."/>
            <person name="Halpern A.L."/>
            <person name="Mobarry C.M."/>
            <person name="Lippert R."/>
            <person name="Walenz B."/>
            <person name="Shatkay H."/>
            <person name="Dew I."/>
            <person name="Miller J.R."/>
            <person name="Flanigan M.J."/>
            <person name="Edwards N.J."/>
            <person name="Bolanos R."/>
            <person name="Fasulo D."/>
            <person name="Halldorsson B.V."/>
            <person name="Hannenhalli S."/>
            <person name="Turner R."/>
            <person name="Yooseph S."/>
            <person name="Lu F."/>
            <person name="Nusskern D.R."/>
            <person name="Shue B.C."/>
            <person name="Zheng X.H."/>
            <person name="Zhong F."/>
            <person name="Delcher A.L."/>
            <person name="Huson D.H."/>
            <person name="Kravitz S.A."/>
            <person name="Mouchard L."/>
            <person name="Reinert K."/>
            <person name="Remington K.A."/>
            <person name="Clark A.G."/>
            <person name="Waterman M.S."/>
            <person name="Eichler E.E."/>
            <person name="Adams M.D."/>
            <person name="Hunkapiller M.W."/>
            <person name="Myers E.W."/>
            <person name="Venter J.C."/>
        </authorList>
    </citation>
    <scope>NUCLEOTIDE SEQUENCE [LARGE SCALE GENOMIC DNA]</scope>
</reference>
<reference key="5">
    <citation type="journal article" date="2004" name="Genome Res.">
        <title>The status, quality, and expansion of the NIH full-length cDNA project: the Mammalian Gene Collection (MGC).</title>
        <authorList>
            <consortium name="The MGC Project Team"/>
        </authorList>
    </citation>
    <scope>NUCLEOTIDE SEQUENCE [LARGE SCALE MRNA] (ISOFORM 3)</scope>
    <source>
        <tissue>Uterus</tissue>
    </source>
</reference>
<reference key="6">
    <citation type="journal article" date="1995" name="J. Exp. Med.">
        <title>Fas-activated serine/threonine kinase (FAST) phosphorylates TIA-1 during Fas-mediated apoptosis.</title>
        <authorList>
            <person name="Tian Q."/>
            <person name="Taupin J.-L."/>
            <person name="Elledge S."/>
            <person name="Robertson M."/>
            <person name="Anderson P."/>
        </authorList>
    </citation>
    <scope>INTERACTION WITH FASTK</scope>
    <scope>PHOSPHORYLATION</scope>
</reference>
<reference key="7">
    <citation type="journal article" date="1996" name="J. Biol. Chem.">
        <title>Individual RNA recognition motifs of TIA-1 and TIAR have different RNA binding specificities.</title>
        <authorList>
            <person name="Dember L.M."/>
            <person name="Kim N.D."/>
            <person name="Liu K.Q."/>
            <person name="Anderson P."/>
        </authorList>
    </citation>
    <scope>FUNCTION</scope>
    <scope>DOMAIN</scope>
    <scope>RNA BINDING</scope>
</reference>
<reference key="8">
    <citation type="journal article" date="1999" name="J. Cell Biol.">
        <title>RNA-binding proteins TIA-1 and TIAR link the phosphorylation of eIF-2 alpha to the assembly of mammalian stress granules.</title>
        <authorList>
            <person name="Kedersha N.L."/>
            <person name="Gupta M."/>
            <person name="Li W."/>
            <person name="Miller I."/>
            <person name="Anderson P."/>
        </authorList>
    </citation>
    <scope>FUNCTION</scope>
    <scope>SUBCELLULAR LOCATION</scope>
    <scope>DOMAIN</scope>
</reference>
<reference key="9">
    <citation type="journal article" date="2000" name="Mol. Cell">
        <title>The apoptosis-promoting factor TIA-1 is a regulator of alternative pre-mRNA splicing.</title>
        <authorList>
            <person name="Foerch P."/>
            <person name="Puig O."/>
            <person name="Kedersha N."/>
            <person name="Martinez C."/>
            <person name="Granneman S."/>
            <person name="Seraphin B."/>
            <person name="Anderson P."/>
            <person name="Valcarcel J."/>
        </authorList>
    </citation>
    <scope>FUNCTION</scope>
</reference>
<reference key="10">
    <citation type="journal article" date="2002" name="EMBO J.">
        <title>The splicing regulator TIA-1 interacts with U1-C to promote U1 snRNP recruitment to 5' splice sites.</title>
        <authorList>
            <person name="Foerch P."/>
            <person name="Puig O."/>
            <person name="Martinez C."/>
            <person name="Seraphin B."/>
            <person name="Valcarcel J."/>
        </authorList>
    </citation>
    <scope>FUNCTION</scope>
    <scope>INTERACTION WITH SNRPC</scope>
    <scope>DOMAIN</scope>
    <scope>RNA BINDING</scope>
</reference>
<reference key="11">
    <citation type="journal article" date="2004" name="J. Biol. Chem.">
        <title>An intronic polypyrimidine-rich element downstream of the donor site modulates cystic fibrosis transmembrane conductance regulator exon 9 alternative splicing.</title>
        <authorList>
            <person name="Zuccato E."/>
            <person name="Buratti E."/>
            <person name="Stuani C."/>
            <person name="Baralle F.E."/>
            <person name="Pagani F."/>
        </authorList>
    </citation>
    <scope>FUNCTION</scope>
</reference>
<reference key="12">
    <citation type="journal article" date="2004" name="Mol. Biol. Cell">
        <title>Stress granule assembly is mediated by prion-like aggregation of TIA-1.</title>
        <authorList>
            <person name="Gilks N."/>
            <person name="Kedersha N."/>
            <person name="Ayodele M."/>
            <person name="Shen L."/>
            <person name="Stoecklin G."/>
            <person name="Dember L.M."/>
            <person name="Anderson P."/>
        </authorList>
    </citation>
    <scope>SUBCELLULAR LOCATION</scope>
</reference>
<reference key="13">
    <citation type="journal article" date="2007" name="J. Biol. Chem.">
        <title>Fas-activated serine/threonine kinase (FAST K) synergizes with TIA-1/TIAR proteins to regulate Fas alternative splicing.</title>
        <authorList>
            <person name="Izquierdo J.M."/>
            <person name="Valcarcel J."/>
        </authorList>
    </citation>
    <scope>INTERACTION WITH FASTK</scope>
</reference>
<reference key="14">
    <citation type="journal article" date="2007" name="J. Biol. Chem.">
        <title>Two isoforms of the T-cell intracellular antigen 1 (TIA-1) splicing factor display distinct splicing regulation activities. Control of TIA-1 isoform ratio by TIA-1-related protein.</title>
        <authorList>
            <person name="Izquierdo J.M."/>
            <person name="Valcarcel J."/>
        </authorList>
    </citation>
    <scope>FUNCTION</scope>
    <scope>SUBCELLULAR LOCATION</scope>
    <scope>TISSUE SPECIFICITY</scope>
</reference>
<reference key="15">
    <citation type="journal article" date="2007" name="J. Biol. Chem.">
        <title>Nuclear protein TIA-1 regulates COL2A1 alternative splicing and interacts with precursor mRNA and genomic DNA.</title>
        <authorList>
            <person name="McAlinden A."/>
            <person name="Liang L."/>
            <person name="Mukudai Y."/>
            <person name="Imamura T."/>
            <person name="Sandell L.J."/>
        </authorList>
    </citation>
    <scope>FUNCTION</scope>
</reference>
<reference key="16">
    <citation type="journal article" date="2008" name="Mol. Cell. Biol.">
        <title>Proline-rich transcript in brain protein induces stress granule formation.</title>
        <authorList>
            <person name="Kim J.E."/>
            <person name="Ryu I."/>
            <person name="Kim W.J."/>
            <person name="Song O.K."/>
            <person name="Ryu J."/>
            <person name="Kwon M.Y."/>
            <person name="Kim J.H."/>
            <person name="Jang S.K."/>
        </authorList>
    </citation>
    <scope>SUBCELLULAR LOCATION</scope>
</reference>
<reference key="17">
    <citation type="journal article" date="2011" name="BMC Syst. Biol.">
        <title>Initial characterization of the human central proteome.</title>
        <authorList>
            <person name="Burkard T.R."/>
            <person name="Planyavsky M."/>
            <person name="Kaupe I."/>
            <person name="Breitwieser F.P."/>
            <person name="Buerckstuemmer T."/>
            <person name="Bennett K.L."/>
            <person name="Superti-Furga G."/>
            <person name="Colinge J."/>
        </authorList>
    </citation>
    <scope>IDENTIFICATION BY MASS SPECTROMETRY [LARGE SCALE ANALYSIS]</scope>
</reference>
<reference key="18">
    <citation type="journal article" date="2012" name="Proc. Natl. Acad. Sci. U.S.A.">
        <title>N-terminal acetylome analyses and functional insights of the N-terminal acetyltransferase NatB.</title>
        <authorList>
            <person name="Van Damme P."/>
            <person name="Lasa M."/>
            <person name="Polevoda B."/>
            <person name="Gazquez C."/>
            <person name="Elosegui-Artola A."/>
            <person name="Kim D.S."/>
            <person name="De Juan-Pardo E."/>
            <person name="Demeyer K."/>
            <person name="Hole K."/>
            <person name="Larrea E."/>
            <person name="Timmerman E."/>
            <person name="Prieto J."/>
            <person name="Arnesen T."/>
            <person name="Sherman F."/>
            <person name="Gevaert K."/>
            <person name="Aldabe R."/>
        </authorList>
    </citation>
    <scope>ACETYLATION [LARGE SCALE ANALYSIS] AT MET-1</scope>
    <scope>IDENTIFICATION BY MASS SPECTROMETRY [LARGE SCALE ANALYSIS]</scope>
</reference>
<reference key="19">
    <citation type="journal article" date="2008" name="Biochem. Biophys. Res. Commun.">
        <title>Structure of the central RNA recognition motif of human TIA-1 at 1.95A resolution.</title>
        <authorList>
            <person name="Kumar A.O."/>
            <person name="Swenson M.C."/>
            <person name="Benning M.M."/>
            <person name="Kielkopf C.L."/>
        </authorList>
    </citation>
    <scope>X-RAY CRYSTALLOGRAPHY (1.95 ANGSTROMS) OF 105-186</scope>
    <scope>SUBCELLULAR LOCATION</scope>
</reference>
<reference key="20">
    <citation type="journal article" date="2013" name="Ann. Neurol.">
        <title>Welander distal myopathy is caused by a mutation in the RNA-binding protein TIA1.</title>
        <authorList>
            <person name="Hackman P."/>
            <person name="Sarparanta J."/>
            <person name="Lehtinen S."/>
            <person name="Vihola A."/>
            <person name="Evila A."/>
            <person name="Jonson P.H."/>
            <person name="Luque H."/>
            <person name="Kere J."/>
            <person name="Screen M."/>
            <person name="Chinnery P.F."/>
            <person name="Ahlberg G."/>
            <person name="Edstrom L."/>
            <person name="Udd B."/>
        </authorList>
    </citation>
    <scope>VARIANT WDM LYS-384</scope>
    <scope>CHARACTERIZATION OF VARIANT WDM LYS-384</scope>
</reference>
<reference key="21">
    <citation type="journal article" date="2013" name="Hum. Mutat.">
        <title>Welander distal myopathy caused by an ancient founder mutation in TIA1 associated with perturbed splicing.</title>
        <authorList>
            <person name="Klar J."/>
            <person name="Sobol M."/>
            <person name="Melberg A."/>
            <person name="Maebert K."/>
            <person name="Ameur A."/>
            <person name="Johansson A.C."/>
            <person name="Feuk L."/>
            <person name="Entesarian M."/>
            <person name="Orlen H."/>
            <person name="Casar-Borota O."/>
            <person name="Dahl N."/>
        </authorList>
    </citation>
    <scope>VARIANT WDM LYS-384</scope>
</reference>
<reference key="22">
    <citation type="journal article" date="2017" name="Neuron">
        <title>TIA1 Mutations in Amyotrophic Lateral Sclerosis and Frontotemporal Dementia Promote Phase Separation and Alter Stress Granule Dynamics.</title>
        <authorList>
            <person name="Mackenzie I.R."/>
            <person name="Nicholson A.M."/>
            <person name="Sarkar M."/>
            <person name="Messing J."/>
            <person name="Purice M.D."/>
            <person name="Pottier C."/>
            <person name="Annu K."/>
            <person name="Baker M."/>
            <person name="Perkerson R.B."/>
            <person name="Kurti A."/>
            <person name="Matchett B.J."/>
            <person name="Mittag T."/>
            <person name="Temirov J."/>
            <person name="Hsiung G.R."/>
            <person name="Krieger C."/>
            <person name="Murray M.E."/>
            <person name="Kato M."/>
            <person name="Fryer J.D."/>
            <person name="Petrucelli L."/>
            <person name="Zinman L."/>
            <person name="Weintraub S."/>
            <person name="Mesulam M."/>
            <person name="Keith J."/>
            <person name="Zivkovic S.A."/>
            <person name="Hirsch-Reinshagen V."/>
            <person name="Roos R.P."/>
            <person name="Zuechner S."/>
            <person name="Graff-Radford N.R."/>
            <person name="Petersen R.C."/>
            <person name="Caselli R.J."/>
            <person name="Wszolek Z.K."/>
            <person name="Finger E."/>
            <person name="Lippa C."/>
            <person name="Lacomis D."/>
            <person name="Stewart H."/>
            <person name="Dickson D.W."/>
            <person name="Kim H.J."/>
            <person name="Rogaeva E."/>
            <person name="Bigio E."/>
            <person name="Boylan K.B."/>
            <person name="Taylor J.P."/>
            <person name="Rademakers R."/>
        </authorList>
    </citation>
    <scope>INVOLVEMENT IN ALS26</scope>
    <scope>VARIANTS ALS26 MET-294; ILE-334; ARG-355; MET-360; LEU-362 AND THR-381</scope>
    <scope>CHARACTERIZATION OF VARIANTS ALS26 LEU-362 AND WDM LYS-384</scope>
</reference>
<gene>
    <name type="primary">TIA1</name>
</gene>
<evidence type="ECO:0000250" key="1">
    <source>
        <dbReference type="UniProtKB" id="P52912"/>
    </source>
</evidence>
<evidence type="ECO:0000255" key="2">
    <source>
        <dbReference type="PROSITE-ProRule" id="PRU00176"/>
    </source>
</evidence>
<evidence type="ECO:0000256" key="3">
    <source>
        <dbReference type="SAM" id="MobiDB-lite"/>
    </source>
</evidence>
<evidence type="ECO:0000269" key="4">
    <source>
    </source>
</evidence>
<evidence type="ECO:0000269" key="5">
    <source>
    </source>
</evidence>
<evidence type="ECO:0000269" key="6">
    <source>
    </source>
</evidence>
<evidence type="ECO:0000269" key="7">
    <source>
    </source>
</evidence>
<evidence type="ECO:0000269" key="8">
    <source>
    </source>
</evidence>
<evidence type="ECO:0000269" key="9">
    <source>
    </source>
</evidence>
<evidence type="ECO:0000269" key="10">
    <source>
    </source>
</evidence>
<evidence type="ECO:0000269" key="11">
    <source>
    </source>
</evidence>
<evidence type="ECO:0000269" key="12">
    <source>
    </source>
</evidence>
<evidence type="ECO:0000269" key="13">
    <source>
    </source>
</evidence>
<evidence type="ECO:0000269" key="14">
    <source>
    </source>
</evidence>
<evidence type="ECO:0000269" key="15">
    <source>
    </source>
</evidence>
<evidence type="ECO:0000269" key="16">
    <source>
    </source>
</evidence>
<evidence type="ECO:0000269" key="17">
    <source>
    </source>
</evidence>
<evidence type="ECO:0000269" key="18">
    <source>
    </source>
</evidence>
<evidence type="ECO:0000303" key="19">
    <source>
    </source>
</evidence>
<evidence type="ECO:0000303" key="20">
    <source>
    </source>
</evidence>
<evidence type="ECO:0000303" key="21">
    <source>
    </source>
</evidence>
<evidence type="ECO:0000305" key="22"/>
<evidence type="ECO:0000305" key="23">
    <source>
    </source>
</evidence>
<evidence type="ECO:0000312" key="24">
    <source>
        <dbReference type="HGNC" id="HGNC:11802"/>
    </source>
</evidence>
<evidence type="ECO:0007744" key="25">
    <source>
    </source>
</evidence>
<evidence type="ECO:0007829" key="26">
    <source>
        <dbReference type="PDB" id="2MJN"/>
    </source>
</evidence>
<evidence type="ECO:0007829" key="27">
    <source>
        <dbReference type="PDB" id="3BS9"/>
    </source>
</evidence>
<evidence type="ECO:0007829" key="28">
    <source>
        <dbReference type="PDB" id="5O2V"/>
    </source>
</evidence>
<evidence type="ECO:0007829" key="29">
    <source>
        <dbReference type="PDB" id="5O3J"/>
    </source>
</evidence>
<evidence type="ECO:0007829" key="30">
    <source>
        <dbReference type="PDB" id="6ELD"/>
    </source>
</evidence>
<dbReference type="EMBL" id="M77142">
    <property type="status" value="NOT_ANNOTATED_CDS"/>
    <property type="molecule type" value="mRNA"/>
</dbReference>
<dbReference type="EMBL" id="S70114">
    <property type="protein sequence ID" value="AAD14053.1"/>
    <property type="molecule type" value="Genomic_DNA"/>
</dbReference>
<dbReference type="EMBL" id="AC016700">
    <property type="protein sequence ID" value="AAX93193.1"/>
    <property type="molecule type" value="Genomic_DNA"/>
</dbReference>
<dbReference type="EMBL" id="CH471053">
    <property type="protein sequence ID" value="EAW99824.1"/>
    <property type="molecule type" value="Genomic_DNA"/>
</dbReference>
<dbReference type="EMBL" id="CH471053">
    <property type="protein sequence ID" value="EAW99826.1"/>
    <property type="molecule type" value="Genomic_DNA"/>
</dbReference>
<dbReference type="EMBL" id="CH471053">
    <property type="protein sequence ID" value="EAW99827.1"/>
    <property type="molecule type" value="Genomic_DNA"/>
</dbReference>
<dbReference type="EMBL" id="BC015944">
    <property type="protein sequence ID" value="AAH15944.1"/>
    <property type="molecule type" value="mRNA"/>
</dbReference>
<dbReference type="CCDS" id="CCDS1900.1">
    <molecule id="P31483-2"/>
</dbReference>
<dbReference type="CCDS" id="CCDS1901.1">
    <molecule id="P31483-1"/>
</dbReference>
<dbReference type="CCDS" id="CCDS86846.1">
    <molecule id="P31483-3"/>
</dbReference>
<dbReference type="PIR" id="A39293">
    <property type="entry name" value="A39293"/>
</dbReference>
<dbReference type="RefSeq" id="NP_001338447.1">
    <molecule id="P31483-3"/>
    <property type="nucleotide sequence ID" value="NM_001351518.2"/>
</dbReference>
<dbReference type="RefSeq" id="NP_071320.2">
    <molecule id="P31483-2"/>
    <property type="nucleotide sequence ID" value="NM_022037.4"/>
</dbReference>
<dbReference type="RefSeq" id="NP_071505.2">
    <molecule id="P31483-1"/>
    <property type="nucleotide sequence ID" value="NM_022173.4"/>
</dbReference>
<dbReference type="PDB" id="2MJN">
    <property type="method" value="NMR"/>
    <property type="chains" value="A=105-285"/>
</dbReference>
<dbReference type="PDB" id="3BS9">
    <property type="method" value="X-ray"/>
    <property type="resolution" value="1.95 A"/>
    <property type="chains" value="A/B=105-186"/>
</dbReference>
<dbReference type="PDB" id="5ITH">
    <property type="method" value="X-ray"/>
    <property type="resolution" value="2.31 A"/>
    <property type="chains" value="A=105-194"/>
</dbReference>
<dbReference type="PDB" id="5O2V">
    <property type="method" value="NMR"/>
    <property type="chains" value="A=1-92"/>
</dbReference>
<dbReference type="PDB" id="5O3J">
    <property type="method" value="X-ray"/>
    <property type="resolution" value="2.97 A"/>
    <property type="chains" value="A=104-181"/>
</dbReference>
<dbReference type="PDB" id="6ELD">
    <property type="method" value="X-ray"/>
    <property type="resolution" value="2.48 A"/>
    <property type="chains" value="A=1-92"/>
</dbReference>
<dbReference type="PDB" id="7VI4">
    <property type="method" value="EM"/>
    <property type="resolution" value="0.95 A"/>
    <property type="chains" value="A=377-386"/>
</dbReference>
<dbReference type="PDB" id="7VI5">
    <property type="method" value="EM"/>
    <property type="resolution" value="1.76 A"/>
    <property type="chains" value="A=377-386"/>
</dbReference>
<dbReference type="PDBsum" id="2MJN"/>
<dbReference type="PDBsum" id="3BS9"/>
<dbReference type="PDBsum" id="5ITH"/>
<dbReference type="PDBsum" id="5O2V"/>
<dbReference type="PDBsum" id="5O3J"/>
<dbReference type="PDBsum" id="6ELD"/>
<dbReference type="PDBsum" id="7VI4"/>
<dbReference type="PDBsum" id="7VI5"/>
<dbReference type="SASBDB" id="P31483"/>
<dbReference type="SMR" id="P31483"/>
<dbReference type="BioGRID" id="112928">
    <property type="interactions" value="113"/>
</dbReference>
<dbReference type="FunCoup" id="P31483">
    <property type="interactions" value="4023"/>
</dbReference>
<dbReference type="IntAct" id="P31483">
    <property type="interactions" value="59"/>
</dbReference>
<dbReference type="MINT" id="P31483"/>
<dbReference type="STRING" id="9606.ENSP00000401371"/>
<dbReference type="GlyGen" id="P31483">
    <property type="glycosylation" value="1 site, 1 O-linked glycan (1 site)"/>
</dbReference>
<dbReference type="iPTMnet" id="P31483"/>
<dbReference type="MetOSite" id="P31483"/>
<dbReference type="PhosphoSitePlus" id="P31483"/>
<dbReference type="SwissPalm" id="P31483"/>
<dbReference type="BioMuta" id="TIA1"/>
<dbReference type="DMDM" id="206729905"/>
<dbReference type="CPTAC" id="CPTAC-1645"/>
<dbReference type="jPOST" id="P31483"/>
<dbReference type="MassIVE" id="P31483"/>
<dbReference type="PaxDb" id="9606-ENSP00000401371"/>
<dbReference type="PeptideAtlas" id="P31483"/>
<dbReference type="ProteomicsDB" id="54790">
    <molecule id="P31483-1"/>
</dbReference>
<dbReference type="ProteomicsDB" id="54791">
    <molecule id="P31483-2"/>
</dbReference>
<dbReference type="ProteomicsDB" id="76048"/>
<dbReference type="Pumba" id="P31483"/>
<dbReference type="Antibodypedia" id="16302">
    <property type="antibodies" value="603 antibodies from 42 providers"/>
</dbReference>
<dbReference type="DNASU" id="7072"/>
<dbReference type="YCharOS" id="P31483">
    <property type="antibodies" value="Tested 12 antibodies from 7 manufacturers"/>
</dbReference>
<dbReference type="Ensembl" id="ENST00000415783.6">
    <molecule id="P31483-2"/>
    <property type="protein sequence ID" value="ENSP00000404023.2"/>
    <property type="gene ID" value="ENSG00000116001.17"/>
</dbReference>
<dbReference type="Ensembl" id="ENST00000416149.6">
    <molecule id="P31483-3"/>
    <property type="protein sequence ID" value="ENSP00000413751.2"/>
    <property type="gene ID" value="ENSG00000116001.17"/>
</dbReference>
<dbReference type="Ensembl" id="ENST00000433529.7">
    <molecule id="P31483-1"/>
    <property type="protein sequence ID" value="ENSP00000401371.2"/>
    <property type="gene ID" value="ENSG00000116001.17"/>
</dbReference>
<dbReference type="GeneID" id="7072"/>
<dbReference type="KEGG" id="hsa:7072"/>
<dbReference type="MANE-Select" id="ENST00000433529.7">
    <property type="protein sequence ID" value="ENSP00000401371.2"/>
    <property type="RefSeq nucleotide sequence ID" value="NM_022173.4"/>
    <property type="RefSeq protein sequence ID" value="NP_071505.2"/>
</dbReference>
<dbReference type="UCSC" id="uc002sgj.5">
    <molecule id="P31483-1"/>
    <property type="organism name" value="human"/>
</dbReference>
<dbReference type="UCSC" id="uc002sgm.4">
    <property type="organism name" value="human"/>
</dbReference>
<dbReference type="AGR" id="HGNC:11802"/>
<dbReference type="CTD" id="7072"/>
<dbReference type="DisGeNET" id="7072"/>
<dbReference type="GeneCards" id="TIA1"/>
<dbReference type="HGNC" id="HGNC:11802">
    <property type="gene designation" value="TIA1"/>
</dbReference>
<dbReference type="HPA" id="ENSG00000116001">
    <property type="expression patterns" value="Low tissue specificity"/>
</dbReference>
<dbReference type="MalaCards" id="TIA1"/>
<dbReference type="MIM" id="603518">
    <property type="type" value="gene"/>
</dbReference>
<dbReference type="MIM" id="604454">
    <property type="type" value="phenotype"/>
</dbReference>
<dbReference type="MIM" id="619133">
    <property type="type" value="phenotype"/>
</dbReference>
<dbReference type="neXtProt" id="NX_P31483"/>
<dbReference type="OpenTargets" id="ENSG00000116001"/>
<dbReference type="Orphanet" id="603">
    <property type="disease" value="Distal myopathy, Welander type"/>
</dbReference>
<dbReference type="PharmGKB" id="PA36511"/>
<dbReference type="VEuPathDB" id="HostDB:ENSG00000116001"/>
<dbReference type="eggNOG" id="KOG0148">
    <property type="taxonomic scope" value="Eukaryota"/>
</dbReference>
<dbReference type="GeneTree" id="ENSGT00940000154962"/>
<dbReference type="HOGENOM" id="CLU_012062_15_6_1"/>
<dbReference type="InParanoid" id="P31483"/>
<dbReference type="OMA" id="VRIFKMQ"/>
<dbReference type="OrthoDB" id="439808at2759"/>
<dbReference type="PAN-GO" id="P31483">
    <property type="GO annotations" value="0 GO annotations based on evolutionary models"/>
</dbReference>
<dbReference type="PhylomeDB" id="P31483"/>
<dbReference type="TreeFam" id="TF312915"/>
<dbReference type="PathwayCommons" id="P31483"/>
<dbReference type="Reactome" id="R-HSA-6803529">
    <property type="pathway name" value="FGFR2 alternative splicing"/>
</dbReference>
<dbReference type="SignaLink" id="P31483"/>
<dbReference type="BioGRID-ORCS" id="7072">
    <property type="hits" value="21 hits in 1155 CRISPR screens"/>
</dbReference>
<dbReference type="CD-CODE" id="0A6B6B10">
    <property type="entry name" value="Synthetic Condensate 000350"/>
</dbReference>
<dbReference type="CD-CODE" id="1249081A">
    <property type="entry name" value="Synthetic Condensate 000025"/>
</dbReference>
<dbReference type="CD-CODE" id="1855AB2E">
    <property type="entry name" value="Synthetic Condensate 000027"/>
</dbReference>
<dbReference type="CD-CODE" id="232F8A39">
    <property type="entry name" value="P-body"/>
</dbReference>
<dbReference type="CD-CODE" id="6209F224">
    <property type="entry name" value="Synthetic Condensate 000281"/>
</dbReference>
<dbReference type="CD-CODE" id="67BDA0FF">
    <property type="entry name" value="Synthetic Condensate 000032"/>
</dbReference>
<dbReference type="CD-CODE" id="9B5E283A">
    <property type="entry name" value="Synthetic Condensate 000373"/>
</dbReference>
<dbReference type="CD-CODE" id="DEE660B4">
    <property type="entry name" value="Stress granule"/>
</dbReference>
<dbReference type="CD-CODE" id="E1879998">
    <property type="entry name" value="Synthetic Condensate 000375"/>
</dbReference>
<dbReference type="ChiTaRS" id="TIA1">
    <property type="organism name" value="human"/>
</dbReference>
<dbReference type="EvolutionaryTrace" id="P31483"/>
<dbReference type="GenomeRNAi" id="7072"/>
<dbReference type="Pharos" id="P31483">
    <property type="development level" value="Tbio"/>
</dbReference>
<dbReference type="PRO" id="PR:P31483"/>
<dbReference type="Proteomes" id="UP000005640">
    <property type="component" value="Chromosome 2"/>
</dbReference>
<dbReference type="RNAct" id="P31483">
    <property type="molecule type" value="protein"/>
</dbReference>
<dbReference type="Bgee" id="ENSG00000116001">
    <property type="expression patterns" value="Expressed in right uterine tube and 204 other cell types or tissues"/>
</dbReference>
<dbReference type="ExpressionAtlas" id="P31483">
    <property type="expression patterns" value="baseline and differential"/>
</dbReference>
<dbReference type="GO" id="GO:0005737">
    <property type="term" value="C:cytoplasm"/>
    <property type="evidence" value="ECO:0000314"/>
    <property type="project" value="UniProtKB"/>
</dbReference>
<dbReference type="GO" id="GO:0010494">
    <property type="term" value="C:cytoplasmic stress granule"/>
    <property type="evidence" value="ECO:0000314"/>
    <property type="project" value="UniProtKB"/>
</dbReference>
<dbReference type="GO" id="GO:0005829">
    <property type="term" value="C:cytosol"/>
    <property type="evidence" value="ECO:0000314"/>
    <property type="project" value="HPA"/>
</dbReference>
<dbReference type="GO" id="GO:0097165">
    <property type="term" value="C:nuclear stress granule"/>
    <property type="evidence" value="ECO:0000314"/>
    <property type="project" value="MGI"/>
</dbReference>
<dbReference type="GO" id="GO:0005654">
    <property type="term" value="C:nucleoplasm"/>
    <property type="evidence" value="ECO:0000314"/>
    <property type="project" value="HPA"/>
</dbReference>
<dbReference type="GO" id="GO:0005634">
    <property type="term" value="C:nucleus"/>
    <property type="evidence" value="ECO:0000314"/>
    <property type="project" value="UniProtKB"/>
</dbReference>
<dbReference type="GO" id="GO:1990904">
    <property type="term" value="C:ribonucleoprotein complex"/>
    <property type="evidence" value="ECO:0007669"/>
    <property type="project" value="Ensembl"/>
</dbReference>
<dbReference type="GO" id="GO:0035925">
    <property type="term" value="F:mRNA 3'-UTR AU-rich region binding"/>
    <property type="evidence" value="ECO:0007669"/>
    <property type="project" value="Ensembl"/>
</dbReference>
<dbReference type="GO" id="GO:0003730">
    <property type="term" value="F:mRNA 3'-UTR binding"/>
    <property type="evidence" value="ECO:0000250"/>
    <property type="project" value="UniProtKB"/>
</dbReference>
<dbReference type="GO" id="GO:0008143">
    <property type="term" value="F:poly(A) binding"/>
    <property type="evidence" value="ECO:0000304"/>
    <property type="project" value="ProtInc"/>
</dbReference>
<dbReference type="GO" id="GO:0003723">
    <property type="term" value="F:RNA binding"/>
    <property type="evidence" value="ECO:0000314"/>
    <property type="project" value="UniProtKB"/>
</dbReference>
<dbReference type="GO" id="GO:0006915">
    <property type="term" value="P:apoptotic process"/>
    <property type="evidence" value="ECO:0000304"/>
    <property type="project" value="ProtInc"/>
</dbReference>
<dbReference type="GO" id="GO:0006397">
    <property type="term" value="P:mRNA processing"/>
    <property type="evidence" value="ECO:0007669"/>
    <property type="project" value="UniProtKB-KW"/>
</dbReference>
<dbReference type="GO" id="GO:0001818">
    <property type="term" value="P:negative regulation of cytokine production"/>
    <property type="evidence" value="ECO:0007669"/>
    <property type="project" value="Ensembl"/>
</dbReference>
<dbReference type="GO" id="GO:0017148">
    <property type="term" value="P:negative regulation of translation"/>
    <property type="evidence" value="ECO:0000250"/>
    <property type="project" value="UniProtKB"/>
</dbReference>
<dbReference type="GO" id="GO:1904037">
    <property type="term" value="P:positive regulation of epithelial cell apoptotic process"/>
    <property type="evidence" value="ECO:0007669"/>
    <property type="project" value="Ensembl"/>
</dbReference>
<dbReference type="GO" id="GO:1903608">
    <property type="term" value="P:protein localization to cytoplasmic stress granule"/>
    <property type="evidence" value="ECO:0000315"/>
    <property type="project" value="AgBase"/>
</dbReference>
<dbReference type="GO" id="GO:0000381">
    <property type="term" value="P:regulation of alternative mRNA splicing, via spliceosome"/>
    <property type="evidence" value="ECO:0000314"/>
    <property type="project" value="UniProtKB"/>
</dbReference>
<dbReference type="GO" id="GO:0048024">
    <property type="term" value="P:regulation of mRNA splicing, via spliceosome"/>
    <property type="evidence" value="ECO:0000314"/>
    <property type="project" value="UniProtKB"/>
</dbReference>
<dbReference type="GO" id="GO:0008380">
    <property type="term" value="P:RNA splicing"/>
    <property type="evidence" value="ECO:0007669"/>
    <property type="project" value="UniProtKB-KW"/>
</dbReference>
<dbReference type="GO" id="GO:0034063">
    <property type="term" value="P:stress granule assembly"/>
    <property type="evidence" value="ECO:0000314"/>
    <property type="project" value="UniProtKB"/>
</dbReference>
<dbReference type="CDD" id="cd12615">
    <property type="entry name" value="RRM1_TIA1"/>
    <property type="match status" value="1"/>
</dbReference>
<dbReference type="CDD" id="cd12618">
    <property type="entry name" value="RRM2_TIA1"/>
    <property type="match status" value="1"/>
</dbReference>
<dbReference type="CDD" id="cd12620">
    <property type="entry name" value="RRM3_TIAR"/>
    <property type="match status" value="1"/>
</dbReference>
<dbReference type="FunFam" id="3.30.70.330:FF:000951">
    <property type="entry name" value="nucleolysin TIA-1 isoform X7"/>
    <property type="match status" value="1"/>
</dbReference>
<dbReference type="FunFam" id="3.30.70.330:FF:000038">
    <property type="entry name" value="Nucleolysin tiar isoform 1"/>
    <property type="match status" value="1"/>
</dbReference>
<dbReference type="FunFam" id="3.30.70.330:FF:000045">
    <property type="entry name" value="Nucleolysin tiar isoform 1"/>
    <property type="match status" value="1"/>
</dbReference>
<dbReference type="Gene3D" id="3.30.70.330">
    <property type="match status" value="3"/>
</dbReference>
<dbReference type="InterPro" id="IPR012677">
    <property type="entry name" value="Nucleotide-bd_a/b_plait_sf"/>
</dbReference>
<dbReference type="InterPro" id="IPR035979">
    <property type="entry name" value="RBD_domain_sf"/>
</dbReference>
<dbReference type="InterPro" id="IPR000504">
    <property type="entry name" value="RRM_dom"/>
</dbReference>
<dbReference type="InterPro" id="IPR003954">
    <property type="entry name" value="RRM_dom_euk"/>
</dbReference>
<dbReference type="InterPro" id="IPR034827">
    <property type="entry name" value="TIA-1_RRM1"/>
</dbReference>
<dbReference type="InterPro" id="IPR034830">
    <property type="entry name" value="TIA1_RRM2"/>
</dbReference>
<dbReference type="InterPro" id="IPR034496">
    <property type="entry name" value="TIAR_RRM3"/>
</dbReference>
<dbReference type="PANTHER" id="PTHR10352">
    <property type="entry name" value="EUKARYOTIC TRANSLATION INITIATION FACTOR 3 SUBUNIT G"/>
    <property type="match status" value="1"/>
</dbReference>
<dbReference type="Pfam" id="PF00076">
    <property type="entry name" value="RRM_1"/>
    <property type="match status" value="3"/>
</dbReference>
<dbReference type="SMART" id="SM00360">
    <property type="entry name" value="RRM"/>
    <property type="match status" value="3"/>
</dbReference>
<dbReference type="SMART" id="SM00361">
    <property type="entry name" value="RRM_1"/>
    <property type="match status" value="3"/>
</dbReference>
<dbReference type="SUPFAM" id="SSF54928">
    <property type="entry name" value="RNA-binding domain, RBD"/>
    <property type="match status" value="3"/>
</dbReference>
<dbReference type="PROSITE" id="PS50102">
    <property type="entry name" value="RRM"/>
    <property type="match status" value="3"/>
</dbReference>
<proteinExistence type="evidence at protein level"/>
<accession>P31483</accession>
<accession>Q53SS9</accession>
<accession>Q96B58</accession>
<comment type="function">
    <text evidence="1 4 5 6 7 10 11 13 18">RNA-binding protein involved in the regulation of alternative pre-RNA splicing and mRNA translation by binding to uridine-rich (U-rich) RNA sequences (PubMed:11106748, PubMed:12486009, PubMed:17488725, PubMed:8576255). Binds to U-rich sequences immediately downstream from a 5' splice sites in a uridine-rich small nuclear ribonucleoprotein (U snRNP)-dependent fashion, thereby modulating alternative pre-RNA splicing (PubMed:11106748, PubMed:8576255). Preferably binds to the U-rich IAS1 sequence in a U1 snRNP-dependent manner; this binding is optimal if a 5' splice site is adjacent to IAS1 (By similarity). Activates the use of heterologous 5' splice sites; the activation depends on the intron sequence downstream from the 5' splice site, with a preference for a downstream U-rich sequence (PubMed:11106748). By interacting with SNRPC/U1-C, promotes recruitment and binding of spliceosomal U1 snRNP to 5' splice sites followed by U-rich sequences, thereby facilitating atypical 5' splice site recognition by U1 snRNP (PubMed:11106748, PubMed:12486009, PubMed:17488725). Activates splicing of alternative exons with weak 5' splice sites followed by a U-rich stretch on its own pre-mRNA and on TIAR mRNA (By similarity). Acts as a modulator of alternative splicing for the apoptotic FAS receptor, thereby promoting apoptosis (PubMed:11106748, PubMed:17488725, PubMed:1934064). Binds to the 5' splice site region of FAS intron 5 to promote accumulation of transcripts that include exon 6 at the expense of transcripts in which exon 6 is skipped, thereby leading to the transcription of a membrane-bound apoptotic FAS receptor, which promotes apoptosis (PubMed:11106748, PubMed:17488725, PubMed:1934064). Binds to a conserved AU-rich cis element in COL2A1 intron 2 and modulates alternative splicing of COL2A1 exon 2 (PubMed:17580305). Also binds to the equivalent AT-rich element in COL2A1 genomic DNA, and may thereby be involved in the regulation of transcription (PubMed:17580305). Binds specifically to a polypyrimidine-rich controlling element (PCE) located between the weak 5' splice site and the intronic splicing silencer of CFTR mRNA to promote exon 9 inclusion, thereby antagonizing PTB1 and its role in exon skipping of CFTR exon 9 (PubMed:14966131). Involved in the repression of mRNA translation by binding to AU-rich elements (AREs) located in mRNA 3' untranslated regions (3' UTRs), including target ARE-bearing mRNAs encoding TNF and PTGS2 (By similarity). Also participates in the cellular response to environmental stress, by acting downstream of the stress-induced phosphorylation of EIF2S1/EIF2A to promote the recruitment of untranslated mRNAs to cytoplasmic stress granules (SGs), leading to stress-induced translational arrest (PubMed:10613902). Formation and recruitment to SGs is regulated by Zn(2+) (By similarity). Possesses nucleolytic activity against cytotoxic lymphocyte target cells (PubMed:1934064).</text>
</comment>
<comment type="function">
    <molecule>Isoform Short</molecule>
    <text evidence="10">Displays enhanced splicing regulatory activity compared with TIA isoform Long.</text>
</comment>
<comment type="subunit">
    <text evidence="1 6 9 17">Homooligomer; homooligomerization is induced by Zn(2+) (By similarity). Interacts with FASTK; the interactions leads to its phosphorylation (PubMed:17135269, PubMed:7544399). Interacts (via RRM1 and the C-terminal glutamine-rich (Q) sequence) with SNRPC/U1-C (via N-terminus); thereby facilitating spliceosomal U1 snRNP recruitment to 5' splice sites (PubMed:12486009).</text>
</comment>
<comment type="interaction">
    <interactant intactId="EBI-1387216">
        <id>P31483</id>
    </interactant>
    <interactant intactId="EBI-1049228">
        <id>P08621</id>
        <label>SNRNP70</label>
    </interactant>
    <organismsDiffer>false</organismsDiffer>
    <experiments>2</experiments>
</comment>
<comment type="interaction">
    <interactant intactId="EBI-1387216">
        <id>P31483</id>
    </interactant>
    <interactant intactId="EBI-607085">
        <id>P09012</id>
        <label>SNRPA</label>
    </interactant>
    <organismsDiffer>false</organismsDiffer>
    <experiments>4</experiments>
</comment>
<comment type="interaction">
    <interactant intactId="EBI-1387216">
        <id>P31483</id>
    </interactant>
    <interactant intactId="EBI-766589">
        <id>P09234</id>
        <label>SNRPC</label>
    </interactant>
    <organismsDiffer>false</organismsDiffer>
    <experiments>6</experiments>
</comment>
<comment type="subcellular location">
    <subcellularLocation>
        <location evidence="4 8 12 23">Nucleus</location>
    </subcellularLocation>
    <subcellularLocation>
        <location evidence="10">Cytoplasm</location>
    </subcellularLocation>
    <subcellularLocation>
        <location evidence="4 8 12">Cytoplasm</location>
        <location evidence="4 8 12">Stress granule</location>
    </subcellularLocation>
    <text evidence="1 4 8">Accumulates in cytoplasmic stress granules (SG) following cellular damage (PubMed:10613902, PubMed:15371533). Recruitment to SG is induced by Zn(2+) (By similarity).</text>
</comment>
<comment type="alternative products">
    <event type="alternative splicing"/>
    <isoform>
        <id>P31483-1</id>
        <name>Long</name>
        <name evidence="20">a</name>
        <sequence type="displayed"/>
    </isoform>
    <isoform>
        <id>P31483-2</id>
        <name>Short</name>
        <name evidence="20">b</name>
        <sequence type="described" ref="VSP_005892"/>
    </isoform>
    <isoform>
        <id>P31483-3</id>
        <name>3</name>
        <sequence type="described" ref="VSP_057403 VSP_057404"/>
    </isoform>
</comment>
<comment type="tissue specificity">
    <text evidence="10">Expressed in heart, small intestine, kidney, liver, lung, skeletal muscle, testes, pancreas, and ovary (at protein level).</text>
</comment>
<comment type="domain">
    <text evidence="6 18">The RNA recognition motif domains RRM 2 and RRM 3 are necessary and sufficient for binding to uridine-rich target pre-mRNA.</text>
</comment>
<comment type="domain">
    <text evidence="4">The RRM 1 and RRM 2 domains are required for the localization to stress granules (SGs) and for the recruitment of TIAR1 and poly(A) RNA to SGs in response to stress.</text>
</comment>
<comment type="domain">
    <text evidence="1">The RRM2 domain and the C-terminal residues 287-340 contribute to nuclear localization.</text>
</comment>
<comment type="domain">
    <text evidence="1">The RRM3 domain mediates nuclear export.</text>
</comment>
<comment type="domain">
    <text evidence="6">The C-terminal glutamine-rich (Q) sequence in combination with the RRM 1 domain is required for the interaction with SNRPC/U1-C and to facilitate recruitment of spliceosomal U1 snRNP to 5' splice sites.</text>
</comment>
<comment type="PTM">
    <text evidence="17">Phosphorylated by FASTK; phosphorylation occurs after FAS ligation in FAS-mediated apoptosis and before DNA fragmentation.</text>
</comment>
<comment type="disease" evidence="14 15">
    <disease id="DI-03766">
        <name>Welander distal myopathy</name>
        <acronym>WDM</acronym>
        <description>An autosomal dominant disorder characterized by adult onset of distal muscle weakness predominantly affecting the distal long extensors of the hands, with slow progression to involve all small hand muscles and the lower legs. Skeletal muscle biopsy shows myopathic changes and prominent rimmed vacuoles. Rare homozygous patients showed earlier onset, faster progression, and proximal muscle involvement.</description>
        <dbReference type="MIM" id="604454"/>
    </disease>
    <text>The disease is caused by variants affecting the gene represented in this entry.</text>
</comment>
<comment type="disease" evidence="16">
    <disease id="DI-06002">
        <name>Amyotrophic lateral sclerosis 26, with or without frontotemporal dementia</name>
        <acronym>ALS26</acronym>
        <description>A form of amyotrophic lateral sclerosis, a neurodegenerative disorder affecting upper motor neurons in the brain and lower motor neurons in the brain stem and spinal cord, resulting in fatal paralysis. Sensory abnormalities are absent. The pathologic hallmarks of the disease include pallor of the corticospinal tract due to loss of motor neurons, presence of ubiquitin-positive inclusions within surviving motor neurons, and deposition of pathologic aggregates. The etiology of amyotrophic lateral sclerosis is likely to be multifactorial, involving both genetic and environmental factors. The disease is inherited in 5-10% of the cases. ALS26 inheritance is autosomal dominant. Some patients may develop frontotemporal dementia.</description>
        <dbReference type="MIM" id="619133"/>
    </disease>
    <text>The disease is caused by variants affecting the gene represented in this entry.</text>
</comment>
<feature type="chain" id="PRO_0000031031" description="Cytotoxic granule associated RNA binding protein TIA1">
    <location>
        <begin position="1"/>
        <end position="386"/>
    </location>
</feature>
<feature type="domain" description="RRM 1" evidence="2">
    <location>
        <begin position="7"/>
        <end position="83"/>
    </location>
</feature>
<feature type="domain" description="RRM 2" evidence="2">
    <location>
        <begin position="106"/>
        <end position="184"/>
    </location>
</feature>
<feature type="domain" description="RRM 3" evidence="2">
    <location>
        <begin position="214"/>
        <end position="286"/>
    </location>
</feature>
<feature type="region of interest" description="Disordered" evidence="3">
    <location>
        <begin position="354"/>
        <end position="386"/>
    </location>
</feature>
<feature type="compositionally biased region" description="Polar residues" evidence="3">
    <location>
        <begin position="363"/>
        <end position="376"/>
    </location>
</feature>
<feature type="modified residue" description="N-acetylmethionine" evidence="25">
    <location>
        <position position="1"/>
    </location>
</feature>
<feature type="splice variant" id="VSP_005892" description="In isoform Short." evidence="21">
    <original>SSTVVSTQRSQD</original>
    <variation>N</variation>
    <location>
        <begin position="93"/>
        <end position="104"/>
    </location>
</feature>
<feature type="splice variant" id="VSP_057403" description="In isoform 3." evidence="19">
    <original>SNTKQLSYDEVVNQSSPSNC</original>
    <variation>CRCIGEEKEMWNFGEKYARF</variation>
    <location>
        <begin position="195"/>
        <end position="214"/>
    </location>
</feature>
<feature type="splice variant" id="VSP_057404" description="In isoform 3." evidence="19">
    <location>
        <begin position="215"/>
        <end position="386"/>
    </location>
</feature>
<feature type="sequence variant" id="VAR_085357" description="In ALS26; uncertain significance; dbSNP:rs144296151." evidence="16">
    <original>V</original>
    <variation>M</variation>
    <location>
        <position position="294"/>
    </location>
</feature>
<feature type="sequence variant" id="VAR_085358" description="In ALS26; uncertain significance; dbSNP:rs747006488." evidence="16">
    <original>M</original>
    <variation>I</variation>
    <location>
        <position position="334"/>
    </location>
</feature>
<feature type="sequence variant" id="VAR_085359" description="In ALS26; uncertain significance; dbSNP:rs372889101." evidence="16">
    <original>G</original>
    <variation>R</variation>
    <location>
        <position position="355"/>
    </location>
</feature>
<feature type="sequence variant" id="VAR_085360" description="In ALS26; uncertain significance; dbSNP:rs201905164." evidence="16">
    <original>V</original>
    <variation>M</variation>
    <location>
        <position position="360"/>
    </location>
</feature>
<feature type="sequence variant" id="VAR_085361" description="In ALS26; accelerated formation of TIA1 amyloid-like fibrils; impaired stress granule disassembly; accumulation of insoluble TARDBP/TDP43-positive stress granules; dbSNP:rs757332023." evidence="16">
    <original>P</original>
    <variation>L</variation>
    <location>
        <position position="362"/>
    </location>
</feature>
<feature type="sequence variant" id="VAR_085362" description="In ALS26; uncertain significance; dbSNP:rs768554955." evidence="16">
    <original>A</original>
    <variation>T</variation>
    <location>
        <position position="381"/>
    </location>
</feature>
<feature type="sequence variant" id="VAR_069897" description="In WDM; results in a mild increase of stress granule numbers compared to controls; impaired stress granule disassembly; dbSNP:rs747068278." evidence="14 15 16">
    <original>E</original>
    <variation>K</variation>
    <location>
        <position position="384"/>
    </location>
</feature>
<feature type="sequence conflict" description="In Ref. 1; M77142." evidence="22" ref="1">
    <original>E</original>
    <variation>Q</variation>
    <location>
        <position position="116"/>
    </location>
</feature>
<feature type="helix" evidence="28">
    <location>
        <begin position="2"/>
        <end position="4"/>
    </location>
</feature>
<feature type="strand" evidence="30">
    <location>
        <begin position="8"/>
        <end position="13"/>
    </location>
</feature>
<feature type="helix" evidence="30">
    <location>
        <begin position="20"/>
        <end position="28"/>
    </location>
</feature>
<feature type="strand" evidence="30">
    <location>
        <begin position="33"/>
        <end position="39"/>
    </location>
</feature>
<feature type="strand" evidence="28">
    <location>
        <begin position="42"/>
        <end position="44"/>
    </location>
</feature>
<feature type="strand" evidence="30">
    <location>
        <begin position="48"/>
        <end position="55"/>
    </location>
</feature>
<feature type="helix" evidence="30">
    <location>
        <begin position="56"/>
        <end position="66"/>
    </location>
</feature>
<feature type="strand" evidence="30">
    <location>
        <begin position="70"/>
        <end position="75"/>
    </location>
</feature>
<feature type="strand" evidence="30">
    <location>
        <begin position="77"/>
        <end position="82"/>
    </location>
</feature>
<feature type="strand" evidence="27">
    <location>
        <begin position="106"/>
        <end position="112"/>
    </location>
</feature>
<feature type="helix" evidence="27">
    <location>
        <begin position="119"/>
        <end position="126"/>
    </location>
</feature>
<feature type="helix" evidence="27">
    <location>
        <begin position="127"/>
        <end position="129"/>
    </location>
</feature>
<feature type="strand" evidence="27">
    <location>
        <begin position="132"/>
        <end position="139"/>
    </location>
</feature>
<feature type="turn" evidence="27">
    <location>
        <begin position="141"/>
        <end position="143"/>
    </location>
</feature>
<feature type="strand" evidence="27">
    <location>
        <begin position="146"/>
        <end position="156"/>
    </location>
</feature>
<feature type="helix" evidence="27">
    <location>
        <begin position="157"/>
        <end position="167"/>
    </location>
</feature>
<feature type="strand" evidence="29">
    <location>
        <begin position="171"/>
        <end position="176"/>
    </location>
</feature>
<feature type="strand" evidence="27">
    <location>
        <begin position="178"/>
        <end position="182"/>
    </location>
</feature>
<feature type="helix" evidence="26">
    <location>
        <begin position="202"/>
        <end position="206"/>
    </location>
</feature>
<feature type="strand" evidence="26">
    <location>
        <begin position="215"/>
        <end position="219"/>
    </location>
</feature>
<feature type="helix" evidence="26">
    <location>
        <begin position="227"/>
        <end position="234"/>
    </location>
</feature>
<feature type="turn" evidence="26">
    <location>
        <begin position="235"/>
        <end position="237"/>
    </location>
</feature>
<feature type="strand" evidence="26">
    <location>
        <begin position="240"/>
        <end position="246"/>
    </location>
</feature>
<feature type="turn" evidence="26">
    <location>
        <begin position="247"/>
        <end position="250"/>
    </location>
</feature>
<feature type="strand" evidence="26">
    <location>
        <begin position="251"/>
        <end position="258"/>
    </location>
</feature>
<feature type="helix" evidence="26">
    <location>
        <begin position="259"/>
        <end position="269"/>
    </location>
</feature>
<feature type="strand" evidence="26">
    <location>
        <begin position="280"/>
        <end position="283"/>
    </location>
</feature>
<organism>
    <name type="scientific">Homo sapiens</name>
    <name type="common">Human</name>
    <dbReference type="NCBI Taxonomy" id="9606"/>
    <lineage>
        <taxon>Eukaryota</taxon>
        <taxon>Metazoa</taxon>
        <taxon>Chordata</taxon>
        <taxon>Craniata</taxon>
        <taxon>Vertebrata</taxon>
        <taxon>Euteleostomi</taxon>
        <taxon>Mammalia</taxon>
        <taxon>Eutheria</taxon>
        <taxon>Euarchontoglires</taxon>
        <taxon>Primates</taxon>
        <taxon>Haplorrhini</taxon>
        <taxon>Catarrhini</taxon>
        <taxon>Hominidae</taxon>
        <taxon>Homo</taxon>
    </lineage>
</organism>
<sequence>MEDEMPKTLYVGNLSRDVTEALILQLFSQIGPCKNCKMIMDTAGNDPYCFVEFHEHRHAAAALAAMNGRKIMGKEVKVNWATTPSSQKKDTSSSTVVSTQRSQDHFHVFVGDLSPEITTEDIKAAFAPFGRISDARVVKDMATGKSKGYGFVSFFNKWDAENAIQQMGGQWLGGRQIRTNWATRKPPAPKSTYESNTKQLSYDEVVNQSSPSNCTVYCGGVTSGLTEQLMRQTFSPFGQIMEIRVFPDKGYSFVRFNSHESAAHAIVSVNGTTIEGHVVKCYWGKETLDMINPVQQQNQIGYPQPYGQWGQWYGNAQQIGQYMPNGWQVPAYGMYGQAWNQQGFNQTQSSAPWMGPNYGVQPPQGQNGSMLPNQPSGYRVAGYETQ</sequence>
<keyword id="KW-0002">3D-structure</keyword>
<keyword id="KW-0007">Acetylation</keyword>
<keyword id="KW-0025">Alternative splicing</keyword>
<keyword id="KW-0036">Amyotrophic lateral sclerosis</keyword>
<keyword id="KW-0053">Apoptosis</keyword>
<keyword id="KW-0963">Cytoplasm</keyword>
<keyword id="KW-0225">Disease variant</keyword>
<keyword id="KW-0507">mRNA processing</keyword>
<keyword id="KW-0508">mRNA splicing</keyword>
<keyword id="KW-0523">Neurodegeneration</keyword>
<keyword id="KW-0539">Nucleus</keyword>
<keyword id="KW-1267">Proteomics identification</keyword>
<keyword id="KW-1185">Reference proteome</keyword>
<keyword id="KW-0677">Repeat</keyword>
<keyword id="KW-0694">RNA-binding</keyword>